<accession>O26902</accession>
<organism>
    <name type="scientific">Methanothermobacter thermautotrophicus (strain ATCC 29096 / DSM 1053 / JCM 10044 / NBRC 100330 / Delta H)</name>
    <name type="common">Methanobacterium thermoautotrophicum</name>
    <dbReference type="NCBI Taxonomy" id="187420"/>
    <lineage>
        <taxon>Archaea</taxon>
        <taxon>Methanobacteriati</taxon>
        <taxon>Methanobacteriota</taxon>
        <taxon>Methanomada group</taxon>
        <taxon>Methanobacteria</taxon>
        <taxon>Methanobacteriales</taxon>
        <taxon>Methanobacteriaceae</taxon>
        <taxon>Methanothermobacter</taxon>
    </lineage>
</organism>
<gene>
    <name type="ordered locus">MTH_811</name>
</gene>
<proteinExistence type="inferred from homology"/>
<keyword id="KW-1185">Reference proteome</keyword>
<sequence>MKGSDALIMALRNMAATLGVYDLMEVRVFLERSCRFVQERYRAIYVDAYMSMVVDSVLDLKAGFSGTPEMDDARYSLRDALKRLDEINAPTIVGLTVLYRTYVKGEPLHPPGTPFPGGFEVEKKDGVHYCPVKDKQSDNPEALCDICIARQSPLP</sequence>
<name>Y811_METTH</name>
<reference key="1">
    <citation type="journal article" date="1997" name="J. Bacteriol.">
        <title>Complete genome sequence of Methanobacterium thermoautotrophicum deltaH: functional analysis and comparative genomics.</title>
        <authorList>
            <person name="Smith D.R."/>
            <person name="Doucette-Stamm L.A."/>
            <person name="Deloughery C."/>
            <person name="Lee H.-M."/>
            <person name="Dubois J."/>
            <person name="Aldredge T."/>
            <person name="Bashirzadeh R."/>
            <person name="Blakely D."/>
            <person name="Cook R."/>
            <person name="Gilbert K."/>
            <person name="Harrison D."/>
            <person name="Hoang L."/>
            <person name="Keagle P."/>
            <person name="Lumm W."/>
            <person name="Pothier B."/>
            <person name="Qiu D."/>
            <person name="Spadafora R."/>
            <person name="Vicare R."/>
            <person name="Wang Y."/>
            <person name="Wierzbowski J."/>
            <person name="Gibson R."/>
            <person name="Jiwani N."/>
            <person name="Caruso A."/>
            <person name="Bush D."/>
            <person name="Safer H."/>
            <person name="Patwell D."/>
            <person name="Prabhakar S."/>
            <person name="McDougall S."/>
            <person name="Shimer G."/>
            <person name="Goyal A."/>
            <person name="Pietrovski S."/>
            <person name="Church G.M."/>
            <person name="Daniels C.J."/>
            <person name="Mao J.-I."/>
            <person name="Rice P."/>
            <person name="Noelling J."/>
            <person name="Reeve J.N."/>
        </authorList>
    </citation>
    <scope>NUCLEOTIDE SEQUENCE [LARGE SCALE GENOMIC DNA]</scope>
    <source>
        <strain>ATCC 29096 / DSM 1053 / JCM 10044 / NBRC 100330 / Delta H</strain>
    </source>
</reference>
<feature type="chain" id="PRO_0000141706" description="UPF0305 protein MTH_811">
    <location>
        <begin position="1"/>
        <end position="155"/>
    </location>
</feature>
<evidence type="ECO:0000255" key="1">
    <source>
        <dbReference type="HAMAP-Rule" id="MF_00763"/>
    </source>
</evidence>
<dbReference type="EMBL" id="AE000666">
    <property type="protein sequence ID" value="AAB85311.1"/>
    <property type="molecule type" value="Genomic_DNA"/>
</dbReference>
<dbReference type="PIR" id="D69208">
    <property type="entry name" value="D69208"/>
</dbReference>
<dbReference type="RefSeq" id="WP_010876446.1">
    <property type="nucleotide sequence ID" value="NC_000916.1"/>
</dbReference>
<dbReference type="STRING" id="187420.MTH_811"/>
<dbReference type="PaxDb" id="187420-MTH_811"/>
<dbReference type="EnsemblBacteria" id="AAB85311">
    <property type="protein sequence ID" value="AAB85311"/>
    <property type="gene ID" value="MTH_811"/>
</dbReference>
<dbReference type="KEGG" id="mth:MTH_811"/>
<dbReference type="PATRIC" id="fig|187420.15.peg.796"/>
<dbReference type="HOGENOM" id="CLU_089549_1_0_2"/>
<dbReference type="InParanoid" id="O26902"/>
<dbReference type="Proteomes" id="UP000005223">
    <property type="component" value="Chromosome"/>
</dbReference>
<dbReference type="HAMAP" id="MF_00763">
    <property type="entry name" value="UPF0305"/>
    <property type="match status" value="1"/>
</dbReference>
<dbReference type="InterPro" id="IPR019215">
    <property type="entry name" value="DUF2115"/>
</dbReference>
<dbReference type="NCBIfam" id="NF002180">
    <property type="entry name" value="PRK01022.2-5"/>
    <property type="match status" value="1"/>
</dbReference>
<dbReference type="Pfam" id="PF09888">
    <property type="entry name" value="DUF2115"/>
    <property type="match status" value="1"/>
</dbReference>
<dbReference type="PIRSF" id="PIRSF004959">
    <property type="entry name" value="UCP004959"/>
    <property type="match status" value="1"/>
</dbReference>
<comment type="similarity">
    <text evidence="1">Belongs to the UPF0305 family.</text>
</comment>
<protein>
    <recommendedName>
        <fullName evidence="1">UPF0305 protein MTH_811</fullName>
    </recommendedName>
</protein>